<sequence>MKPTVISADALFDAHRAALKWEWIAGHAHPERRFDEVAVRDAQSAADLVGYLNYIHPYRVQIVGRREVRYLQPGDASGDNPVELQEKRISRIVTLEPPVLVVADGCTPPDRLVAMCERADIPLFCTEDSAGHVIDVLRGYLSQHFAERTSRHGVFMDILGLGVLLTGESGLGKSELGLELISRGHGLVADDVVDLFRVSQAAIEGRCPELLRNLLEVRGIGLLDIRAIFGETAVRRKMRLKLIVHLVRKETLDRDFERLPYEPLFEDILGMPVRKVVIAVDAGRNLAVLVEAAVRNTVLQLRGIDTYRDFIQRHRDLMDSGDSGL</sequence>
<evidence type="ECO:0000255" key="1">
    <source>
        <dbReference type="HAMAP-Rule" id="MF_01249"/>
    </source>
</evidence>
<proteinExistence type="inferred from homology"/>
<feature type="chain" id="PRO_1000139905" description="HPr kinase/phosphorylase">
    <location>
        <begin position="1"/>
        <end position="325"/>
    </location>
</feature>
<feature type="region of interest" description="Important for the catalytic mechanism of both phosphorylation and dephosphorylation" evidence="1">
    <location>
        <begin position="215"/>
        <end position="224"/>
    </location>
</feature>
<feature type="region of interest" description="Important for the catalytic mechanism of dephosphorylation" evidence="1">
    <location>
        <begin position="279"/>
        <end position="284"/>
    </location>
</feature>
<feature type="active site" evidence="1">
    <location>
        <position position="152"/>
    </location>
</feature>
<feature type="active site" evidence="1">
    <location>
        <position position="173"/>
    </location>
</feature>
<feature type="active site" description="Proton acceptor; for phosphorylation activity. Proton donor; for dephosphorylation activity" evidence="1">
    <location>
        <position position="191"/>
    </location>
</feature>
<feature type="active site" evidence="1">
    <location>
        <position position="258"/>
    </location>
</feature>
<feature type="binding site" evidence="1">
    <location>
        <begin position="167"/>
        <end position="174"/>
    </location>
    <ligand>
        <name>ATP</name>
        <dbReference type="ChEBI" id="CHEBI:30616"/>
    </ligand>
</feature>
<feature type="binding site" evidence="1">
    <location>
        <position position="174"/>
    </location>
    <ligand>
        <name>Mg(2+)</name>
        <dbReference type="ChEBI" id="CHEBI:18420"/>
    </ligand>
</feature>
<feature type="binding site" evidence="1">
    <location>
        <position position="216"/>
    </location>
    <ligand>
        <name>Mg(2+)</name>
        <dbReference type="ChEBI" id="CHEBI:18420"/>
    </ligand>
</feature>
<comment type="function">
    <text evidence="1">Catalyzes the ATP- as well as the pyrophosphate-dependent phosphorylation of a specific serine residue in HPr, a phosphocarrier protein of the phosphoenolpyruvate-dependent sugar phosphotransferase system (PTS). HprK/P also catalyzes the pyrophosphate-producing, inorganic phosphate-dependent dephosphorylation (phosphorolysis) of seryl-phosphorylated HPr (P-Ser-HPr).</text>
</comment>
<comment type="catalytic activity">
    <reaction evidence="1">
        <text>[HPr protein]-L-serine + ATP = [HPr protein]-O-phospho-L-serine + ADP + H(+)</text>
        <dbReference type="Rhea" id="RHEA:46600"/>
        <dbReference type="Rhea" id="RHEA-COMP:11602"/>
        <dbReference type="Rhea" id="RHEA-COMP:11603"/>
        <dbReference type="ChEBI" id="CHEBI:15378"/>
        <dbReference type="ChEBI" id="CHEBI:29999"/>
        <dbReference type="ChEBI" id="CHEBI:30616"/>
        <dbReference type="ChEBI" id="CHEBI:83421"/>
        <dbReference type="ChEBI" id="CHEBI:456216"/>
    </reaction>
</comment>
<comment type="catalytic activity">
    <reaction evidence="1">
        <text>[HPr protein]-O-phospho-L-serine + phosphate + H(+) = [HPr protein]-L-serine + diphosphate</text>
        <dbReference type="Rhea" id="RHEA:46604"/>
        <dbReference type="Rhea" id="RHEA-COMP:11602"/>
        <dbReference type="Rhea" id="RHEA-COMP:11603"/>
        <dbReference type="ChEBI" id="CHEBI:15378"/>
        <dbReference type="ChEBI" id="CHEBI:29999"/>
        <dbReference type="ChEBI" id="CHEBI:33019"/>
        <dbReference type="ChEBI" id="CHEBI:43474"/>
        <dbReference type="ChEBI" id="CHEBI:83421"/>
    </reaction>
</comment>
<comment type="cofactor">
    <cofactor evidence="1">
        <name>Mg(2+)</name>
        <dbReference type="ChEBI" id="CHEBI:18420"/>
    </cofactor>
</comment>
<comment type="subunit">
    <text evidence="1">Homohexamer.</text>
</comment>
<comment type="domain">
    <text evidence="1">The Walker A ATP-binding motif also binds Pi and PPi.</text>
</comment>
<comment type="miscellaneous">
    <text evidence="1">Both phosphorylation and phosphorolysis are carried out by the same active site and suggest a common mechanism for both reactions.</text>
</comment>
<comment type="similarity">
    <text evidence="1">Belongs to the HPrK/P family.</text>
</comment>
<dbReference type="EC" id="2.7.11.-" evidence="1"/>
<dbReference type="EC" id="2.7.4.-" evidence="1"/>
<dbReference type="EMBL" id="CP001013">
    <property type="protein sequence ID" value="ACB32748.1"/>
    <property type="molecule type" value="Genomic_DNA"/>
</dbReference>
<dbReference type="RefSeq" id="WP_012345510.1">
    <property type="nucleotide sequence ID" value="NC_010524.1"/>
</dbReference>
<dbReference type="SMR" id="B1XXX9"/>
<dbReference type="STRING" id="395495.Lcho_0473"/>
<dbReference type="KEGG" id="lch:Lcho_0473"/>
<dbReference type="eggNOG" id="COG1493">
    <property type="taxonomic scope" value="Bacteria"/>
</dbReference>
<dbReference type="HOGENOM" id="CLU_052030_0_2_4"/>
<dbReference type="OrthoDB" id="9778803at2"/>
<dbReference type="Proteomes" id="UP000001693">
    <property type="component" value="Chromosome"/>
</dbReference>
<dbReference type="GO" id="GO:0005524">
    <property type="term" value="F:ATP binding"/>
    <property type="evidence" value="ECO:0007669"/>
    <property type="project" value="UniProtKB-UniRule"/>
</dbReference>
<dbReference type="GO" id="GO:0000287">
    <property type="term" value="F:magnesium ion binding"/>
    <property type="evidence" value="ECO:0007669"/>
    <property type="project" value="UniProtKB-UniRule"/>
</dbReference>
<dbReference type="GO" id="GO:0000155">
    <property type="term" value="F:phosphorelay sensor kinase activity"/>
    <property type="evidence" value="ECO:0007669"/>
    <property type="project" value="InterPro"/>
</dbReference>
<dbReference type="GO" id="GO:0004674">
    <property type="term" value="F:protein serine/threonine kinase activity"/>
    <property type="evidence" value="ECO:0007669"/>
    <property type="project" value="UniProtKB-KW"/>
</dbReference>
<dbReference type="GO" id="GO:0004712">
    <property type="term" value="F:protein serine/threonine/tyrosine kinase activity"/>
    <property type="evidence" value="ECO:0007669"/>
    <property type="project" value="UniProtKB-UniRule"/>
</dbReference>
<dbReference type="GO" id="GO:0006109">
    <property type="term" value="P:regulation of carbohydrate metabolic process"/>
    <property type="evidence" value="ECO:0007669"/>
    <property type="project" value="UniProtKB-UniRule"/>
</dbReference>
<dbReference type="CDD" id="cd01918">
    <property type="entry name" value="HprK_C"/>
    <property type="match status" value="1"/>
</dbReference>
<dbReference type="Gene3D" id="3.40.1390.20">
    <property type="entry name" value="HprK N-terminal domain-like"/>
    <property type="match status" value="1"/>
</dbReference>
<dbReference type="Gene3D" id="3.40.50.300">
    <property type="entry name" value="P-loop containing nucleotide triphosphate hydrolases"/>
    <property type="match status" value="1"/>
</dbReference>
<dbReference type="HAMAP" id="MF_01249">
    <property type="entry name" value="HPr_kinase"/>
    <property type="match status" value="1"/>
</dbReference>
<dbReference type="InterPro" id="IPR003755">
    <property type="entry name" value="HPr(Ser)_kin/Pase"/>
</dbReference>
<dbReference type="InterPro" id="IPR011104">
    <property type="entry name" value="Hpr_kin/Pase_C"/>
</dbReference>
<dbReference type="InterPro" id="IPR011126">
    <property type="entry name" value="Hpr_kin/Pase_Hpr_N"/>
</dbReference>
<dbReference type="InterPro" id="IPR027417">
    <property type="entry name" value="P-loop_NTPase"/>
</dbReference>
<dbReference type="InterPro" id="IPR028979">
    <property type="entry name" value="Ser_kin/Pase_Hpr-like_N_sf"/>
</dbReference>
<dbReference type="NCBIfam" id="TIGR00679">
    <property type="entry name" value="hpr-ser"/>
    <property type="match status" value="1"/>
</dbReference>
<dbReference type="PANTHER" id="PTHR30305:SF1">
    <property type="entry name" value="HPR KINASE_PHOSPHORYLASE"/>
    <property type="match status" value="1"/>
</dbReference>
<dbReference type="PANTHER" id="PTHR30305">
    <property type="entry name" value="PROTEIN YJDM-RELATED"/>
    <property type="match status" value="1"/>
</dbReference>
<dbReference type="Pfam" id="PF07475">
    <property type="entry name" value="Hpr_kinase_C"/>
    <property type="match status" value="1"/>
</dbReference>
<dbReference type="Pfam" id="PF02603">
    <property type="entry name" value="Hpr_kinase_N"/>
    <property type="match status" value="1"/>
</dbReference>
<dbReference type="SUPFAM" id="SSF75138">
    <property type="entry name" value="HprK N-terminal domain-like"/>
    <property type="match status" value="1"/>
</dbReference>
<dbReference type="SUPFAM" id="SSF53795">
    <property type="entry name" value="PEP carboxykinase-like"/>
    <property type="match status" value="1"/>
</dbReference>
<organism>
    <name type="scientific">Leptothrix cholodnii (strain ATCC 51168 / LMG 8142 / SP-6)</name>
    <name type="common">Leptothrix discophora (strain SP-6)</name>
    <dbReference type="NCBI Taxonomy" id="395495"/>
    <lineage>
        <taxon>Bacteria</taxon>
        <taxon>Pseudomonadati</taxon>
        <taxon>Pseudomonadota</taxon>
        <taxon>Betaproteobacteria</taxon>
        <taxon>Burkholderiales</taxon>
        <taxon>Sphaerotilaceae</taxon>
        <taxon>Leptothrix</taxon>
    </lineage>
</organism>
<name>HPRK_LEPCP</name>
<accession>B1XXX9</accession>
<gene>
    <name evidence="1" type="primary">hprK</name>
    <name type="ordered locus">Lcho_0473</name>
</gene>
<protein>
    <recommendedName>
        <fullName evidence="1">HPr kinase/phosphorylase</fullName>
        <shortName evidence="1">HPrK/P</shortName>
        <ecNumber evidence="1">2.7.11.-</ecNumber>
        <ecNumber evidence="1">2.7.4.-</ecNumber>
    </recommendedName>
    <alternativeName>
        <fullName evidence="1">HPr(Ser) kinase/phosphorylase</fullName>
    </alternativeName>
</protein>
<reference key="1">
    <citation type="submission" date="2008-03" db="EMBL/GenBank/DDBJ databases">
        <title>Complete sequence of Leptothrix cholodnii SP-6.</title>
        <authorList>
            <consortium name="US DOE Joint Genome Institute"/>
            <person name="Copeland A."/>
            <person name="Lucas S."/>
            <person name="Lapidus A."/>
            <person name="Glavina del Rio T."/>
            <person name="Dalin E."/>
            <person name="Tice H."/>
            <person name="Bruce D."/>
            <person name="Goodwin L."/>
            <person name="Pitluck S."/>
            <person name="Chertkov O."/>
            <person name="Brettin T."/>
            <person name="Detter J.C."/>
            <person name="Han C."/>
            <person name="Kuske C.R."/>
            <person name="Schmutz J."/>
            <person name="Larimer F."/>
            <person name="Land M."/>
            <person name="Hauser L."/>
            <person name="Kyrpides N."/>
            <person name="Lykidis A."/>
            <person name="Emerson D."/>
            <person name="Richardson P."/>
        </authorList>
    </citation>
    <scope>NUCLEOTIDE SEQUENCE [LARGE SCALE GENOMIC DNA]</scope>
    <source>
        <strain>ATCC 51168 / LMG 8142 / SP-6</strain>
    </source>
</reference>
<keyword id="KW-0067">ATP-binding</keyword>
<keyword id="KW-0418">Kinase</keyword>
<keyword id="KW-0460">Magnesium</keyword>
<keyword id="KW-0479">Metal-binding</keyword>
<keyword id="KW-0511">Multifunctional enzyme</keyword>
<keyword id="KW-0547">Nucleotide-binding</keyword>
<keyword id="KW-1185">Reference proteome</keyword>
<keyword id="KW-0723">Serine/threonine-protein kinase</keyword>
<keyword id="KW-0808">Transferase</keyword>